<feature type="chain" id="PRO_0000438779" description="Uridine and thymidine phosphorylase" evidence="4">
    <location>
        <begin position="1"/>
        <end position="295"/>
    </location>
</feature>
<feature type="binding site" evidence="1">
    <location>
        <position position="81"/>
    </location>
    <ligand>
        <name>phosphate</name>
        <dbReference type="ChEBI" id="CHEBI:43474"/>
    </ligand>
</feature>
<feature type="binding site" evidence="1">
    <location>
        <begin position="125"/>
        <end position="128"/>
    </location>
    <ligand>
        <name>phosphate</name>
        <dbReference type="ChEBI" id="CHEBI:43474"/>
    </ligand>
</feature>
<feature type="binding site" evidence="1">
    <location>
        <position position="203"/>
    </location>
    <ligand>
        <name>substrate</name>
    </ligand>
</feature>
<feature type="binding site" evidence="1">
    <location>
        <position position="205"/>
    </location>
    <ligand>
        <name>substrate</name>
    </ligand>
</feature>
<feature type="mutagenesis site" description="In jg1; 80 percent reduction in uridine and thymidine phosphorylase activity. Reduced lifespan. Resistance to 5-fluorouracil (5-FU) or 5-deoxy-5-fluorouridine (5dFUR)-mediated toxicity." evidence="2">
    <original>T</original>
    <variation>I</variation>
    <location>
        <position position="128"/>
    </location>
</feature>
<feature type="mutagenesis site" description="In jg2; 80 percent reduction in uridine and thymidine phosphorylase activity. Reduced lifespan. Resistance to 5-fluorouracil (5-FU)-mediated toxicity." evidence="2">
    <original>Y</original>
    <variation>F</variation>
    <location>
        <position position="209"/>
    </location>
</feature>
<keyword id="KW-0328">Glycosyltransferase</keyword>
<keyword id="KW-0665">Pyrimidine biosynthesis</keyword>
<keyword id="KW-1185">Reference proteome</keyword>
<keyword id="KW-0808">Transferase</keyword>
<proteinExistence type="evidence at protein level"/>
<organism evidence="5">
    <name type="scientific">Caenorhabditis elegans</name>
    <dbReference type="NCBI Taxonomy" id="6239"/>
    <lineage>
        <taxon>Eukaryota</taxon>
        <taxon>Metazoa</taxon>
        <taxon>Ecdysozoa</taxon>
        <taxon>Nematoda</taxon>
        <taxon>Chromadorea</taxon>
        <taxon>Rhabditida</taxon>
        <taxon>Rhabditina</taxon>
        <taxon>Rhabditomorpha</taxon>
        <taxon>Rhabditoidea</taxon>
        <taxon>Rhabditidae</taxon>
        <taxon>Peloderinae</taxon>
        <taxon>Caenorhabditis</taxon>
    </lineage>
</organism>
<reference evidence="5" key="1">
    <citation type="journal article" date="1998" name="Science">
        <title>Genome sequence of the nematode C. elegans: a platform for investigating biology.</title>
        <authorList>
            <consortium name="The C. elegans sequencing consortium"/>
        </authorList>
    </citation>
    <scope>NUCLEOTIDE SEQUENCE [LARGE SCALE GENOMIC DNA]</scope>
    <source>
        <strain evidence="5">Bristol N2</strain>
    </source>
</reference>
<reference evidence="4" key="2">
    <citation type="journal article" date="2009" name="FEBS J.">
        <title>Functional analysis of pyrimidine biosynthesis enzymes using the anticancer drug 5-fluorouracil in Caenorhabditis elegans.</title>
        <authorList>
            <person name="Kim S."/>
            <person name="Park D.H."/>
            <person name="Kim T.H."/>
            <person name="Hwang M."/>
            <person name="Shim J."/>
        </authorList>
    </citation>
    <scope>FUNCTION</scope>
    <scope>CATALYTIC ACTIVITY</scope>
    <scope>PATHWAY</scope>
    <scope>TISSUE SPECIFICITY</scope>
    <scope>DISRUPTION PHENOTYPE</scope>
    <scope>MUTAGENESIS OF THR-128 AND TYR-209</scope>
</reference>
<accession>Q23588</accession>
<sequence length="295" mass="33042">MNGLVKNGNVEKPNKYFDIKDKRDFLYHFGFGVDTLDIPAVFGDTKFVCTGGSPGRFKLYAEWFAKEANIPCSENLSRSDRFVIYKTGPVCWINHGMGTPSLSIMLVESFKLMHHAGVKNPTFIRLGTSGGVGVPPGTVVVSTEAMNAELGDTYVQIIAGKRIERPTQLDAALREALCEVGKEKSIPVETGKTMCADDFYEGQMRLDGYFCDYEEEDKYAFLRKLNALGVRNIEMESTCFASFTCRAGFQSAIVCVTLLNRMDGDQVQIAKEQYIEYEERPFRLVTAYIRKQTGI</sequence>
<evidence type="ECO:0000250" key="1">
    <source>
        <dbReference type="UniProtKB" id="Q16831"/>
    </source>
</evidence>
<evidence type="ECO:0000269" key="2">
    <source>
    </source>
</evidence>
<evidence type="ECO:0000303" key="3">
    <source>
    </source>
</evidence>
<evidence type="ECO:0000305" key="4"/>
<evidence type="ECO:0000312" key="5">
    <source>
        <dbReference type="Proteomes" id="UP000001940"/>
    </source>
</evidence>
<evidence type="ECO:0000312" key="6">
    <source>
        <dbReference type="WormBase" id="ZK783.2"/>
    </source>
</evidence>
<comment type="function">
    <text evidence="2 4">Catalyzes the reversible phosphorylytic cleavage of uridine and thymidine to uracil and ribose-phosphate or thymine and deoxyribose-1-phosphate (PubMed:19645718). The produced molecules are then utilized as carbon and energy sources or in the rescue of pyrimidine bases for nucleotide synthesis (Probable). Required for normal lifespan (PubMed:19645718).</text>
</comment>
<comment type="catalytic activity">
    <reaction evidence="2">
        <text>uridine + phosphate = alpha-D-ribose 1-phosphate + uracil</text>
        <dbReference type="Rhea" id="RHEA:24388"/>
        <dbReference type="ChEBI" id="CHEBI:16704"/>
        <dbReference type="ChEBI" id="CHEBI:17568"/>
        <dbReference type="ChEBI" id="CHEBI:43474"/>
        <dbReference type="ChEBI" id="CHEBI:57720"/>
        <dbReference type="EC" id="2.4.2.2"/>
    </reaction>
</comment>
<comment type="catalytic activity">
    <reaction evidence="2">
        <text>thymidine + phosphate = 2-deoxy-alpha-D-ribose 1-phosphate + thymine</text>
        <dbReference type="Rhea" id="RHEA:16037"/>
        <dbReference type="ChEBI" id="CHEBI:17748"/>
        <dbReference type="ChEBI" id="CHEBI:17821"/>
        <dbReference type="ChEBI" id="CHEBI:43474"/>
        <dbReference type="ChEBI" id="CHEBI:57259"/>
        <dbReference type="EC" id="2.4.2.2"/>
    </reaction>
</comment>
<comment type="catalytic activity">
    <reaction evidence="2">
        <text>2'-deoxyuridine + phosphate = 2-deoxy-alpha-D-ribose 1-phosphate + uracil</text>
        <dbReference type="Rhea" id="RHEA:22824"/>
        <dbReference type="ChEBI" id="CHEBI:16450"/>
        <dbReference type="ChEBI" id="CHEBI:17568"/>
        <dbReference type="ChEBI" id="CHEBI:43474"/>
        <dbReference type="ChEBI" id="CHEBI:57259"/>
        <dbReference type="EC" id="2.4.2.2"/>
    </reaction>
</comment>
<comment type="pathway">
    <text evidence="2">Pyrimidine metabolism; UMP biosynthesis via salvage pathway; uracil from uridine (phosphorylase route): step 1/1.</text>
</comment>
<comment type="pathway">
    <text evidence="2">Pyrimidine metabolism; dTMP biosynthesis via salvage pathway; dTMP from thymine: step 1/2.</text>
</comment>
<comment type="tissue specificity">
    <text evidence="2">Expressed in hypodermis, pharynx, spermatheca and gonad.</text>
</comment>
<comment type="disruption phenotype">
    <text evidence="2">RNAi-mediated knockdown causes resistance to 5-fluorouracil (5-FU)-mediated toxicity.</text>
</comment>
<comment type="similarity">
    <text evidence="4">Belongs to the PNP/UDP phosphorylase family.</text>
</comment>
<dbReference type="EC" id="2.4.2.2" evidence="2"/>
<dbReference type="EMBL" id="BX284603">
    <property type="protein sequence ID" value="CCD65249.1"/>
    <property type="molecule type" value="Genomic_DNA"/>
</dbReference>
<dbReference type="PIR" id="T34514">
    <property type="entry name" value="T34514"/>
</dbReference>
<dbReference type="RefSeq" id="NP_498671.2">
    <property type="nucleotide sequence ID" value="NM_066270.7"/>
</dbReference>
<dbReference type="SMR" id="Q23588"/>
<dbReference type="FunCoup" id="Q23588">
    <property type="interactions" value="338"/>
</dbReference>
<dbReference type="STRING" id="6239.ZK783.2.1"/>
<dbReference type="PaxDb" id="6239-ZK783.2"/>
<dbReference type="PeptideAtlas" id="Q23588"/>
<dbReference type="EnsemblMetazoa" id="ZK783.2.1">
    <property type="protein sequence ID" value="ZK783.2.1"/>
    <property type="gene ID" value="WBGene00022817"/>
</dbReference>
<dbReference type="GeneID" id="176077"/>
<dbReference type="KEGG" id="cel:CELE_ZK783.2"/>
<dbReference type="AGR" id="WB:WBGene00022817"/>
<dbReference type="CTD" id="176077"/>
<dbReference type="WormBase" id="ZK783.2">
    <property type="protein sequence ID" value="CE34466"/>
    <property type="gene ID" value="WBGene00022817"/>
    <property type="gene designation" value="upp-1"/>
</dbReference>
<dbReference type="eggNOG" id="KOG3728">
    <property type="taxonomic scope" value="Eukaryota"/>
</dbReference>
<dbReference type="GeneTree" id="ENSGT00940000167337"/>
<dbReference type="HOGENOM" id="CLU_054104_0_0_1"/>
<dbReference type="InParanoid" id="Q23588"/>
<dbReference type="OMA" id="HPNICAG"/>
<dbReference type="OrthoDB" id="204058at2759"/>
<dbReference type="PhylomeDB" id="Q23588"/>
<dbReference type="Reactome" id="R-CEL-73614">
    <property type="pathway name" value="Pyrimidine salvage"/>
</dbReference>
<dbReference type="Reactome" id="R-CEL-73621">
    <property type="pathway name" value="Pyrimidine catabolism"/>
</dbReference>
<dbReference type="UniPathway" id="UPA00574">
    <property type="reaction ID" value="UER00633"/>
</dbReference>
<dbReference type="UniPathway" id="UPA00578">
    <property type="reaction ID" value="UER00638"/>
</dbReference>
<dbReference type="PRO" id="PR:Q23588"/>
<dbReference type="Proteomes" id="UP000001940">
    <property type="component" value="Chromosome III"/>
</dbReference>
<dbReference type="Bgee" id="WBGene00022817">
    <property type="expression patterns" value="Expressed in adult organism and 4 other cell types or tissues"/>
</dbReference>
<dbReference type="GO" id="GO:0005829">
    <property type="term" value="C:cytosol"/>
    <property type="evidence" value="ECO:0000318"/>
    <property type="project" value="GO_Central"/>
</dbReference>
<dbReference type="GO" id="GO:0047847">
    <property type="term" value="F:deoxyuridine phosphorylase activity"/>
    <property type="evidence" value="ECO:0007669"/>
    <property type="project" value="RHEA"/>
</dbReference>
<dbReference type="GO" id="GO:0009032">
    <property type="term" value="F:thymidine phosphorylase activity"/>
    <property type="evidence" value="ECO:0000314"/>
    <property type="project" value="WormBase"/>
</dbReference>
<dbReference type="GO" id="GO:0004850">
    <property type="term" value="F:uridine phosphorylase activity"/>
    <property type="evidence" value="ECO:0000314"/>
    <property type="project" value="WormBase"/>
</dbReference>
<dbReference type="GO" id="GO:0009166">
    <property type="term" value="P:nucleotide catabolic process"/>
    <property type="evidence" value="ECO:0007669"/>
    <property type="project" value="InterPro"/>
</dbReference>
<dbReference type="GO" id="GO:0046104">
    <property type="term" value="P:thymidine metabolic process"/>
    <property type="evidence" value="ECO:0000314"/>
    <property type="project" value="WormBase"/>
</dbReference>
<dbReference type="GO" id="GO:0044206">
    <property type="term" value="P:UMP salvage"/>
    <property type="evidence" value="ECO:0007669"/>
    <property type="project" value="UniProtKB-UniPathway"/>
</dbReference>
<dbReference type="GO" id="GO:0006212">
    <property type="term" value="P:uracil catabolic process"/>
    <property type="evidence" value="ECO:0000315"/>
    <property type="project" value="WormBase"/>
</dbReference>
<dbReference type="GO" id="GO:0019860">
    <property type="term" value="P:uracil metabolic process"/>
    <property type="evidence" value="ECO:0000315"/>
    <property type="project" value="WormBase"/>
</dbReference>
<dbReference type="GO" id="GO:0006218">
    <property type="term" value="P:uridine catabolic process"/>
    <property type="evidence" value="ECO:0000315"/>
    <property type="project" value="WormBase"/>
</dbReference>
<dbReference type="GO" id="GO:0046108">
    <property type="term" value="P:uridine metabolic process"/>
    <property type="evidence" value="ECO:0000314"/>
    <property type="project" value="WormBase"/>
</dbReference>
<dbReference type="CDD" id="cd17763">
    <property type="entry name" value="UP_hUPP-like"/>
    <property type="match status" value="1"/>
</dbReference>
<dbReference type="FunFam" id="3.40.50.1580:FF:000027">
    <property type="entry name" value="Uridine and thymidine phosphorylase"/>
    <property type="match status" value="1"/>
</dbReference>
<dbReference type="Gene3D" id="3.40.50.1580">
    <property type="entry name" value="Nucleoside phosphorylase domain"/>
    <property type="match status" value="1"/>
</dbReference>
<dbReference type="InterPro" id="IPR000845">
    <property type="entry name" value="Nucleoside_phosphorylase_d"/>
</dbReference>
<dbReference type="InterPro" id="IPR035994">
    <property type="entry name" value="Nucleoside_phosphorylase_sf"/>
</dbReference>
<dbReference type="InterPro" id="IPR010059">
    <property type="entry name" value="Uridine_phosphorylase_euk"/>
</dbReference>
<dbReference type="NCBIfam" id="TIGR01719">
    <property type="entry name" value="euk_UDPppase"/>
    <property type="match status" value="1"/>
</dbReference>
<dbReference type="PANTHER" id="PTHR43691:SF11">
    <property type="entry name" value="FI09636P-RELATED"/>
    <property type="match status" value="1"/>
</dbReference>
<dbReference type="PANTHER" id="PTHR43691">
    <property type="entry name" value="URIDINE PHOSPHORYLASE"/>
    <property type="match status" value="1"/>
</dbReference>
<dbReference type="Pfam" id="PF01048">
    <property type="entry name" value="PNP_UDP_1"/>
    <property type="match status" value="1"/>
</dbReference>
<dbReference type="SUPFAM" id="SSF53167">
    <property type="entry name" value="Purine and uridine phosphorylases"/>
    <property type="match status" value="1"/>
</dbReference>
<protein>
    <recommendedName>
        <fullName evidence="3">Uridine and thymidine phosphorylase</fullName>
        <ecNumber evidence="2">2.4.2.2</ecNumber>
    </recommendedName>
    <alternativeName>
        <fullName evidence="4">Pyrimidine-nucleoside phosphorylase</fullName>
    </alternativeName>
</protein>
<gene>
    <name evidence="6" type="primary">upp-1</name>
    <name evidence="6" type="ORF">ZK783.2</name>
</gene>
<name>UTPP_CAEEL</name>